<feature type="chain" id="PRO_0000117275" description="Methylenetetrahydrofolate--tRNA-(uracil-5-)-methyltransferase TrmFO">
    <location>
        <begin position="1"/>
        <end position="448"/>
    </location>
</feature>
<feature type="binding site" evidence="1">
    <location>
        <begin position="13"/>
        <end position="18"/>
    </location>
    <ligand>
        <name>FAD</name>
        <dbReference type="ChEBI" id="CHEBI:57692"/>
    </ligand>
</feature>
<name>TRMFO_STRP8</name>
<keyword id="KW-0963">Cytoplasm</keyword>
<keyword id="KW-0274">FAD</keyword>
<keyword id="KW-0285">Flavoprotein</keyword>
<keyword id="KW-0489">Methyltransferase</keyword>
<keyword id="KW-0520">NAD</keyword>
<keyword id="KW-0521">NADP</keyword>
<keyword id="KW-0808">Transferase</keyword>
<keyword id="KW-0819">tRNA processing</keyword>
<organism>
    <name type="scientific">Streptococcus pyogenes serotype M18 (strain MGAS8232)</name>
    <dbReference type="NCBI Taxonomy" id="186103"/>
    <lineage>
        <taxon>Bacteria</taxon>
        <taxon>Bacillati</taxon>
        <taxon>Bacillota</taxon>
        <taxon>Bacilli</taxon>
        <taxon>Lactobacillales</taxon>
        <taxon>Streptococcaceae</taxon>
        <taxon>Streptococcus</taxon>
    </lineage>
</organism>
<gene>
    <name evidence="1" type="primary">trmFO</name>
    <name type="synonym">gid</name>
    <name type="ordered locus">spyM18_1125</name>
</gene>
<accession>Q8P106</accession>
<protein>
    <recommendedName>
        <fullName evidence="1">Methylenetetrahydrofolate--tRNA-(uracil-5-)-methyltransferase TrmFO</fullName>
        <ecNumber evidence="1">2.1.1.74</ecNumber>
    </recommendedName>
    <alternativeName>
        <fullName evidence="1">Folate-dependent tRNA (uracil-5-)-methyltransferase</fullName>
    </alternativeName>
    <alternativeName>
        <fullName evidence="1">Folate-dependent tRNA(M-5-U54)-methyltransferase</fullName>
    </alternativeName>
</protein>
<reference key="1">
    <citation type="journal article" date="2002" name="Proc. Natl. Acad. Sci. U.S.A.">
        <title>Genome sequence and comparative microarray analysis of serotype M18 group A Streptococcus strains associated with acute rheumatic fever outbreaks.</title>
        <authorList>
            <person name="Smoot J.C."/>
            <person name="Barbian K.D."/>
            <person name="Van Gompel J.J."/>
            <person name="Smoot L.M."/>
            <person name="Chaussee M.S."/>
            <person name="Sylva G.L."/>
            <person name="Sturdevant D.E."/>
            <person name="Ricklefs S.M."/>
            <person name="Porcella S.F."/>
            <person name="Parkins L.D."/>
            <person name="Beres S.B."/>
            <person name="Campbell D.S."/>
            <person name="Smith T.M."/>
            <person name="Zhang Q."/>
            <person name="Kapur V."/>
            <person name="Daly J.A."/>
            <person name="Veasy L.G."/>
            <person name="Musser J.M."/>
        </authorList>
    </citation>
    <scope>NUCLEOTIDE SEQUENCE [LARGE SCALE GENOMIC DNA]</scope>
    <source>
        <strain>MGAS8232</strain>
    </source>
</reference>
<evidence type="ECO:0000255" key="1">
    <source>
        <dbReference type="HAMAP-Rule" id="MF_01037"/>
    </source>
</evidence>
<dbReference type="EC" id="2.1.1.74" evidence="1"/>
<dbReference type="EMBL" id="AE009949">
    <property type="protein sequence ID" value="AAL97746.1"/>
    <property type="molecule type" value="Genomic_DNA"/>
</dbReference>
<dbReference type="RefSeq" id="WP_011017774.1">
    <property type="nucleotide sequence ID" value="NC_003485.1"/>
</dbReference>
<dbReference type="SMR" id="Q8P106"/>
<dbReference type="KEGG" id="spm:spyM18_1125"/>
<dbReference type="HOGENOM" id="CLU_033057_1_0_9"/>
<dbReference type="GO" id="GO:0005829">
    <property type="term" value="C:cytosol"/>
    <property type="evidence" value="ECO:0007669"/>
    <property type="project" value="TreeGrafter"/>
</dbReference>
<dbReference type="GO" id="GO:0050660">
    <property type="term" value="F:flavin adenine dinucleotide binding"/>
    <property type="evidence" value="ECO:0007669"/>
    <property type="project" value="UniProtKB-UniRule"/>
</dbReference>
<dbReference type="GO" id="GO:0047151">
    <property type="term" value="F:tRNA (uracil(54)-C5)-methyltransferase activity, 5,10-methylenetetrahydrofolate-dependent"/>
    <property type="evidence" value="ECO:0007669"/>
    <property type="project" value="UniProtKB-UniRule"/>
</dbReference>
<dbReference type="GO" id="GO:0030488">
    <property type="term" value="P:tRNA methylation"/>
    <property type="evidence" value="ECO:0007669"/>
    <property type="project" value="TreeGrafter"/>
</dbReference>
<dbReference type="GO" id="GO:0002098">
    <property type="term" value="P:tRNA wobble uridine modification"/>
    <property type="evidence" value="ECO:0007669"/>
    <property type="project" value="TreeGrafter"/>
</dbReference>
<dbReference type="FunFam" id="3.50.50.60:FF:000035">
    <property type="entry name" value="Methylenetetrahydrofolate--tRNA-(uracil-5-)-methyltransferase TrmFO"/>
    <property type="match status" value="1"/>
</dbReference>
<dbReference type="FunFam" id="3.50.50.60:FF:000040">
    <property type="entry name" value="Methylenetetrahydrofolate--tRNA-(uracil-5-)-methyltransferase TrmFO"/>
    <property type="match status" value="1"/>
</dbReference>
<dbReference type="Gene3D" id="3.50.50.60">
    <property type="entry name" value="FAD/NAD(P)-binding domain"/>
    <property type="match status" value="2"/>
</dbReference>
<dbReference type="HAMAP" id="MF_01037">
    <property type="entry name" value="TrmFO"/>
    <property type="match status" value="1"/>
</dbReference>
<dbReference type="InterPro" id="IPR036188">
    <property type="entry name" value="FAD/NAD-bd_sf"/>
</dbReference>
<dbReference type="InterPro" id="IPR002218">
    <property type="entry name" value="MnmG-rel"/>
</dbReference>
<dbReference type="InterPro" id="IPR020595">
    <property type="entry name" value="MnmG-rel_CS"/>
</dbReference>
<dbReference type="InterPro" id="IPR040131">
    <property type="entry name" value="MnmG_N"/>
</dbReference>
<dbReference type="InterPro" id="IPR004417">
    <property type="entry name" value="TrmFO"/>
</dbReference>
<dbReference type="NCBIfam" id="TIGR00137">
    <property type="entry name" value="gid_trmFO"/>
    <property type="match status" value="1"/>
</dbReference>
<dbReference type="NCBIfam" id="NF003739">
    <property type="entry name" value="PRK05335.1"/>
    <property type="match status" value="1"/>
</dbReference>
<dbReference type="PANTHER" id="PTHR11806">
    <property type="entry name" value="GLUCOSE INHIBITED DIVISION PROTEIN A"/>
    <property type="match status" value="1"/>
</dbReference>
<dbReference type="PANTHER" id="PTHR11806:SF2">
    <property type="entry name" value="METHYLENETETRAHYDROFOLATE--TRNA-(URACIL-5-)-METHYLTRANSFERASE TRMFO"/>
    <property type="match status" value="1"/>
</dbReference>
<dbReference type="Pfam" id="PF01134">
    <property type="entry name" value="GIDA"/>
    <property type="match status" value="1"/>
</dbReference>
<dbReference type="SUPFAM" id="SSF51905">
    <property type="entry name" value="FAD/NAD(P)-binding domain"/>
    <property type="match status" value="1"/>
</dbReference>
<dbReference type="PROSITE" id="PS01281">
    <property type="entry name" value="GIDA_2"/>
    <property type="match status" value="1"/>
</dbReference>
<comment type="function">
    <text evidence="1">Catalyzes the folate-dependent formation of 5-methyl-uridine at position 54 (M-5-U54) in all tRNAs.</text>
</comment>
<comment type="catalytic activity">
    <reaction evidence="1">
        <text>uridine(54) in tRNA + (6R)-5,10-methylene-5,6,7,8-tetrahydrofolate + NADH + H(+) = 5-methyluridine(54) in tRNA + (6S)-5,6,7,8-tetrahydrofolate + NAD(+)</text>
        <dbReference type="Rhea" id="RHEA:16873"/>
        <dbReference type="Rhea" id="RHEA-COMP:10167"/>
        <dbReference type="Rhea" id="RHEA-COMP:10193"/>
        <dbReference type="ChEBI" id="CHEBI:15378"/>
        <dbReference type="ChEBI" id="CHEBI:15636"/>
        <dbReference type="ChEBI" id="CHEBI:57453"/>
        <dbReference type="ChEBI" id="CHEBI:57540"/>
        <dbReference type="ChEBI" id="CHEBI:57945"/>
        <dbReference type="ChEBI" id="CHEBI:65315"/>
        <dbReference type="ChEBI" id="CHEBI:74447"/>
        <dbReference type="EC" id="2.1.1.74"/>
    </reaction>
</comment>
<comment type="catalytic activity">
    <reaction evidence="1">
        <text>uridine(54) in tRNA + (6R)-5,10-methylene-5,6,7,8-tetrahydrofolate + NADPH + H(+) = 5-methyluridine(54) in tRNA + (6S)-5,6,7,8-tetrahydrofolate + NADP(+)</text>
        <dbReference type="Rhea" id="RHEA:62372"/>
        <dbReference type="Rhea" id="RHEA-COMP:10167"/>
        <dbReference type="Rhea" id="RHEA-COMP:10193"/>
        <dbReference type="ChEBI" id="CHEBI:15378"/>
        <dbReference type="ChEBI" id="CHEBI:15636"/>
        <dbReference type="ChEBI" id="CHEBI:57453"/>
        <dbReference type="ChEBI" id="CHEBI:57783"/>
        <dbReference type="ChEBI" id="CHEBI:58349"/>
        <dbReference type="ChEBI" id="CHEBI:65315"/>
        <dbReference type="ChEBI" id="CHEBI:74447"/>
        <dbReference type="EC" id="2.1.1.74"/>
    </reaction>
</comment>
<comment type="cofactor">
    <cofactor evidence="1">
        <name>FAD</name>
        <dbReference type="ChEBI" id="CHEBI:57692"/>
    </cofactor>
</comment>
<comment type="subcellular location">
    <subcellularLocation>
        <location evidence="1">Cytoplasm</location>
    </subcellularLocation>
</comment>
<comment type="similarity">
    <text evidence="1">Belongs to the MnmG family. TrmFO subfamily.</text>
</comment>
<sequence>MSQSTATYINVIGAGLAGSEAAYQIAKRGIPVKLYEMRGVKATPQHKTTNFAELVCSNSFRGDSLTNAVGLLKEEMRRLDSIIMRNGEANRVPAGGAMAVDREGYAKSVTAELENHPLIEVIRDEITEIPNDAITVIATGPLTSDALSEKIHAVNGGDGFYFYDAAAPIIDKSTIDMSKVYLKSRYDKGEAAYLNCPMTKEEFMAFHEALTTAEEAPLNAFEKEKYFEGCMPIEVMAKRGIKTMLYGPMKPVGLEYPDDYTGPRDGEFKTPYAVVQLRQDNAAGSLYNIVGFQTHLKWGEQKRVFQMIPGLENAEFVRYGVMHRNSYMDSPNLLTETFQSRSNPNLFFAGQMTGVEGYVESAASGLVAGINAARLFKREEALIFPQTTAIGSLPHYVTHADSKHFQPMNVNFGIIKELEGPRIRDKKERYEAIASRALADLDTCLALL</sequence>
<proteinExistence type="inferred from homology"/>